<gene>
    <name evidence="1" type="primary">rpo11</name>
    <name evidence="1" type="synonym">rpoL</name>
    <name type="ordered locus">MmarC5_1412</name>
</gene>
<proteinExistence type="inferred from homology"/>
<comment type="function">
    <text evidence="1">DNA-dependent RNA polymerase (RNAP) catalyzes the transcription of DNA into RNA using the four ribonucleoside triphosphates as substrates.</text>
</comment>
<comment type="catalytic activity">
    <reaction evidence="1">
        <text>RNA(n) + a ribonucleoside 5'-triphosphate = RNA(n+1) + diphosphate</text>
        <dbReference type="Rhea" id="RHEA:21248"/>
        <dbReference type="Rhea" id="RHEA-COMP:14527"/>
        <dbReference type="Rhea" id="RHEA-COMP:17342"/>
        <dbReference type="ChEBI" id="CHEBI:33019"/>
        <dbReference type="ChEBI" id="CHEBI:61557"/>
        <dbReference type="ChEBI" id="CHEBI:140395"/>
        <dbReference type="EC" id="2.7.7.6"/>
    </reaction>
</comment>
<comment type="subunit">
    <text evidence="1">Part of the RNA polymerase complex.</text>
</comment>
<comment type="subcellular location">
    <subcellularLocation>
        <location evidence="1">Cytoplasm</location>
    </subcellularLocation>
</comment>
<comment type="similarity">
    <text evidence="1">Belongs to the archaeal Rpo11/eukaryotic RPB11/RPC19 RNA polymerase subunit family.</text>
</comment>
<feature type="chain" id="PRO_1000005782" description="DNA-directed RNA polymerase subunit Rpo11">
    <location>
        <begin position="1"/>
        <end position="96"/>
    </location>
</feature>
<dbReference type="EC" id="2.7.7.6" evidence="1"/>
<dbReference type="EMBL" id="CP000609">
    <property type="protein sequence ID" value="ABO35710.1"/>
    <property type="molecule type" value="Genomic_DNA"/>
</dbReference>
<dbReference type="RefSeq" id="WP_011869161.1">
    <property type="nucleotide sequence ID" value="NC_009135.1"/>
</dbReference>
<dbReference type="SMR" id="A4FZS6"/>
<dbReference type="STRING" id="402880.MmarC5_1412"/>
<dbReference type="GeneID" id="4928221"/>
<dbReference type="KEGG" id="mmq:MmarC5_1412"/>
<dbReference type="eggNOG" id="arCOG04111">
    <property type="taxonomic scope" value="Archaea"/>
</dbReference>
<dbReference type="HOGENOM" id="CLU_090381_5_0_2"/>
<dbReference type="OrthoDB" id="24205at2157"/>
<dbReference type="Proteomes" id="UP000000253">
    <property type="component" value="Chromosome"/>
</dbReference>
<dbReference type="GO" id="GO:0005737">
    <property type="term" value="C:cytoplasm"/>
    <property type="evidence" value="ECO:0007669"/>
    <property type="project" value="UniProtKB-SubCell"/>
</dbReference>
<dbReference type="GO" id="GO:0000428">
    <property type="term" value="C:DNA-directed RNA polymerase complex"/>
    <property type="evidence" value="ECO:0007669"/>
    <property type="project" value="UniProtKB-KW"/>
</dbReference>
<dbReference type="GO" id="GO:0003677">
    <property type="term" value="F:DNA binding"/>
    <property type="evidence" value="ECO:0007669"/>
    <property type="project" value="InterPro"/>
</dbReference>
<dbReference type="GO" id="GO:0003899">
    <property type="term" value="F:DNA-directed RNA polymerase activity"/>
    <property type="evidence" value="ECO:0007669"/>
    <property type="project" value="UniProtKB-UniRule"/>
</dbReference>
<dbReference type="GO" id="GO:0046983">
    <property type="term" value="F:protein dimerization activity"/>
    <property type="evidence" value="ECO:0007669"/>
    <property type="project" value="InterPro"/>
</dbReference>
<dbReference type="GO" id="GO:0006351">
    <property type="term" value="P:DNA-templated transcription"/>
    <property type="evidence" value="ECO:0007669"/>
    <property type="project" value="UniProtKB-UniRule"/>
</dbReference>
<dbReference type="CDD" id="cd06927">
    <property type="entry name" value="RNAP_L"/>
    <property type="match status" value="1"/>
</dbReference>
<dbReference type="Gene3D" id="3.30.1360.10">
    <property type="entry name" value="RNA polymerase, RBP11-like subunit"/>
    <property type="match status" value="1"/>
</dbReference>
<dbReference type="HAMAP" id="MF_00261">
    <property type="entry name" value="RNApol_arch_Rpo11"/>
    <property type="match status" value="1"/>
</dbReference>
<dbReference type="InterPro" id="IPR036603">
    <property type="entry name" value="RBP11-like"/>
</dbReference>
<dbReference type="InterPro" id="IPR009025">
    <property type="entry name" value="RBP11-like_dimer"/>
</dbReference>
<dbReference type="InterPro" id="IPR008193">
    <property type="entry name" value="RNA_pol_Rpb11_13-16kDa_CS"/>
</dbReference>
<dbReference type="InterPro" id="IPR022905">
    <property type="entry name" value="Rpo11-like"/>
</dbReference>
<dbReference type="NCBIfam" id="NF002234">
    <property type="entry name" value="PRK01146.1-2"/>
    <property type="match status" value="1"/>
</dbReference>
<dbReference type="Pfam" id="PF13656">
    <property type="entry name" value="RNA_pol_L_2"/>
    <property type="match status" value="1"/>
</dbReference>
<dbReference type="SUPFAM" id="SSF55257">
    <property type="entry name" value="RBP11-like subunits of RNA polymerase"/>
    <property type="match status" value="1"/>
</dbReference>
<dbReference type="PROSITE" id="PS01154">
    <property type="entry name" value="RNA_POL_L_13KD"/>
    <property type="match status" value="1"/>
</dbReference>
<organism>
    <name type="scientific">Methanococcus maripaludis (strain C5 / ATCC BAA-1333)</name>
    <dbReference type="NCBI Taxonomy" id="402880"/>
    <lineage>
        <taxon>Archaea</taxon>
        <taxon>Methanobacteriati</taxon>
        <taxon>Methanobacteriota</taxon>
        <taxon>Methanomada group</taxon>
        <taxon>Methanococci</taxon>
        <taxon>Methanococcales</taxon>
        <taxon>Methanococcaceae</taxon>
        <taxon>Methanococcus</taxon>
    </lineage>
</organism>
<accession>A4FZS6</accession>
<name>RPO11_METM5</name>
<evidence type="ECO:0000255" key="1">
    <source>
        <dbReference type="HAMAP-Rule" id="MF_00261"/>
    </source>
</evidence>
<keyword id="KW-0963">Cytoplasm</keyword>
<keyword id="KW-0240">DNA-directed RNA polymerase</keyword>
<keyword id="KW-0548">Nucleotidyltransferase</keyword>
<keyword id="KW-0804">Transcription</keyword>
<keyword id="KW-0808">Transferase</keyword>
<protein>
    <recommendedName>
        <fullName evidence="1">DNA-directed RNA polymerase subunit Rpo11</fullName>
        <ecNumber evidence="1">2.7.7.6</ecNumber>
    </recommendedName>
    <alternativeName>
        <fullName evidence="1">DNA-directed RNA polymerase subunit L</fullName>
    </alternativeName>
</protein>
<sequence>MNYVNIVEKSKNFIELELVNDDHSLSNLIKEVLLSKKGVILASYGVEHPVLDPDTGRYISNPTIMLKTDEKTDAEKVLKEALKDIVDLCNKTLKEL</sequence>
<reference key="1">
    <citation type="submission" date="2007-03" db="EMBL/GenBank/DDBJ databases">
        <title>Complete sequence of chromosome of Methanococcus maripaludis C5.</title>
        <authorList>
            <consortium name="US DOE Joint Genome Institute"/>
            <person name="Copeland A."/>
            <person name="Lucas S."/>
            <person name="Lapidus A."/>
            <person name="Barry K."/>
            <person name="Glavina del Rio T."/>
            <person name="Dalin E."/>
            <person name="Tice H."/>
            <person name="Pitluck S."/>
            <person name="Chertkov O."/>
            <person name="Brettin T."/>
            <person name="Bruce D."/>
            <person name="Han C."/>
            <person name="Detter J.C."/>
            <person name="Schmutz J."/>
            <person name="Larimer F."/>
            <person name="Land M."/>
            <person name="Hauser L."/>
            <person name="Kyrpides N."/>
            <person name="Mikhailova N."/>
            <person name="Sieprawska-Lupa M."/>
            <person name="Whitman W.B."/>
            <person name="Richardson P."/>
        </authorList>
    </citation>
    <scope>NUCLEOTIDE SEQUENCE [LARGE SCALE GENOMIC DNA]</scope>
    <source>
        <strain>C5 / ATCC BAA-1333</strain>
    </source>
</reference>